<proteinExistence type="inferred from homology"/>
<dbReference type="EC" id="1.3.7.7" evidence="1"/>
<dbReference type="EMBL" id="DQ821119">
    <property type="protein sequence ID" value="ABG79658.1"/>
    <property type="molecule type" value="Genomic_DNA"/>
</dbReference>
<dbReference type="RefSeq" id="YP_001023759.1">
    <property type="nucleotide sequence ID" value="NC_008829.1"/>
</dbReference>
<dbReference type="SMR" id="A2T391"/>
<dbReference type="GeneID" id="4788140"/>
<dbReference type="UniPathway" id="UPA00670"/>
<dbReference type="GO" id="GO:0009507">
    <property type="term" value="C:chloroplast"/>
    <property type="evidence" value="ECO:0007669"/>
    <property type="project" value="UniProtKB-SubCell"/>
</dbReference>
<dbReference type="GO" id="GO:0051539">
    <property type="term" value="F:4 iron, 4 sulfur cluster binding"/>
    <property type="evidence" value="ECO:0007669"/>
    <property type="project" value="UniProtKB-UniRule"/>
</dbReference>
<dbReference type="GO" id="GO:0005524">
    <property type="term" value="F:ATP binding"/>
    <property type="evidence" value="ECO:0007669"/>
    <property type="project" value="UniProtKB-UniRule"/>
</dbReference>
<dbReference type="GO" id="GO:0046872">
    <property type="term" value="F:metal ion binding"/>
    <property type="evidence" value="ECO:0007669"/>
    <property type="project" value="UniProtKB-KW"/>
</dbReference>
<dbReference type="GO" id="GO:0016730">
    <property type="term" value="F:oxidoreductase activity, acting on iron-sulfur proteins as donors"/>
    <property type="evidence" value="ECO:0007669"/>
    <property type="project" value="InterPro"/>
</dbReference>
<dbReference type="GO" id="GO:0016636">
    <property type="term" value="F:oxidoreductase activity, acting on the CH-CH group of donors, iron-sulfur protein as acceptor"/>
    <property type="evidence" value="ECO:0007669"/>
    <property type="project" value="UniProtKB-UniRule"/>
</dbReference>
<dbReference type="GO" id="GO:0036068">
    <property type="term" value="P:light-independent chlorophyll biosynthetic process"/>
    <property type="evidence" value="ECO:0007669"/>
    <property type="project" value="UniProtKB-UniRule"/>
</dbReference>
<dbReference type="GO" id="GO:0019685">
    <property type="term" value="P:photosynthesis, dark reaction"/>
    <property type="evidence" value="ECO:0007669"/>
    <property type="project" value="InterPro"/>
</dbReference>
<dbReference type="CDD" id="cd01979">
    <property type="entry name" value="Pchlide_reductase_N"/>
    <property type="match status" value="1"/>
</dbReference>
<dbReference type="Gene3D" id="3.40.50.1980">
    <property type="entry name" value="Nitrogenase molybdenum iron protein domain"/>
    <property type="match status" value="3"/>
</dbReference>
<dbReference type="HAMAP" id="MF_00352">
    <property type="entry name" value="ChlN_BchN"/>
    <property type="match status" value="1"/>
</dbReference>
<dbReference type="InterPro" id="IPR050293">
    <property type="entry name" value="LIPOR_BchN/ChlN"/>
</dbReference>
<dbReference type="InterPro" id="IPR000510">
    <property type="entry name" value="Nase/OxRdtase_comp1"/>
</dbReference>
<dbReference type="InterPro" id="IPR005970">
    <property type="entry name" value="Protochl_reductN"/>
</dbReference>
<dbReference type="NCBIfam" id="TIGR01279">
    <property type="entry name" value="DPOR_bchN"/>
    <property type="match status" value="1"/>
</dbReference>
<dbReference type="NCBIfam" id="NF002768">
    <property type="entry name" value="PRK02842.1"/>
    <property type="match status" value="1"/>
</dbReference>
<dbReference type="PANTHER" id="PTHR39429">
    <property type="entry name" value="LIGHT-INDEPENDENT PROTOCHLOROPHYLLIDE REDUCTASE SUBUNIT N"/>
    <property type="match status" value="1"/>
</dbReference>
<dbReference type="PANTHER" id="PTHR39429:SF3">
    <property type="entry name" value="LIGHT-INDEPENDENT PROTOCHLOROPHYLLIDE REDUCTASE SUBUNIT N"/>
    <property type="match status" value="1"/>
</dbReference>
<dbReference type="Pfam" id="PF00148">
    <property type="entry name" value="Oxidored_nitro"/>
    <property type="match status" value="1"/>
</dbReference>
<dbReference type="PIRSF" id="PIRSF000162">
    <property type="entry name" value="P_chlorophyll_rd"/>
    <property type="match status" value="1"/>
</dbReference>
<dbReference type="SUPFAM" id="SSF53807">
    <property type="entry name" value="Helical backbone' metal receptor"/>
    <property type="match status" value="1"/>
</dbReference>
<name>CHLN_ANGEV</name>
<feature type="chain" id="PRO_0000324034" description="Light-independent protochlorophyllide reductase subunit N">
    <location>
        <begin position="1"/>
        <end position="458"/>
    </location>
</feature>
<feature type="binding site" evidence="1">
    <location>
        <position position="20"/>
    </location>
    <ligand>
        <name>[4Fe-4S] cluster</name>
        <dbReference type="ChEBI" id="CHEBI:49883"/>
        <note>ligand shared with heterodimeric partner</note>
    </ligand>
</feature>
<feature type="binding site" evidence="1">
    <location>
        <position position="45"/>
    </location>
    <ligand>
        <name>[4Fe-4S] cluster</name>
        <dbReference type="ChEBI" id="CHEBI:49883"/>
        <note>ligand shared with heterodimeric partner</note>
    </ligand>
</feature>
<feature type="binding site" evidence="1">
    <location>
        <position position="105"/>
    </location>
    <ligand>
        <name>[4Fe-4S] cluster</name>
        <dbReference type="ChEBI" id="CHEBI:49883"/>
        <note>ligand shared with heterodimeric partner</note>
    </ligand>
</feature>
<protein>
    <recommendedName>
        <fullName evidence="1">Light-independent protochlorophyllide reductase subunit N</fullName>
        <shortName evidence="1">DPOR subunit N</shortName>
        <shortName evidence="1">LI-POR subunit N</shortName>
        <ecNumber evidence="1">1.3.7.7</ecNumber>
    </recommendedName>
</protein>
<reference key="1">
    <citation type="journal article" date="2007" name="Am. Fern J.">
        <title>The complete plastid genome sequence of Angiopteris evecta (G. Forst.) Hoffm. (Marattiaceae).</title>
        <authorList>
            <person name="Roper J.M."/>
            <person name="Hansen S.K."/>
            <person name="Wolf P.G."/>
            <person name="Karol K.G."/>
            <person name="Mandoli D.F."/>
            <person name="Everett K.D.E."/>
            <person name="Kuehl J.V."/>
            <person name="Boore J.L."/>
        </authorList>
    </citation>
    <scope>NUCLEOTIDE SEQUENCE [LARGE SCALE GENOMIC DNA]</scope>
</reference>
<sequence length="458" mass="52133">MNTFEILTFECETGNYHTFCPISCVAWLYQKIEDSFFLVIGTKTCGYFLQNALGVMIFAEPRYAMAELEEGDISAQLNDHEELKRLCLHIKKDRNPSVIVWIGTCTTEIIKMDLEGIAPKVETEIGIPIVVARANGLDYAFTQGEDTVLAAITHRCPEYKSWVDEEDGTEKKVLSVYSERNRDETFKSPNHPPLVLFGSVPSTVASQLDSELKRQSIRVSGWLPAQRYTELPSLGEEVYVCGVNPFLSRTATTLMRRRKCKLIGAPFPIGPDGTRAWIEKICSVFGIKPQGLEERETQIWNNLKDYLDLLRGKSVFFMGDNLLEVSLARFLIRCGMIVYEIGIPYMDKRYQAAELSLLQDTCKKMHIPMPRIVEKPDNYNQIQRMRELQPDLAITGMAHANPLEARGINTKWSVEFTFAQIHGFTNAKDVLELVTRPLRRNNSLEHLGWTNLLQPTII</sequence>
<organism>
    <name type="scientific">Angiopteris evecta</name>
    <name type="common">Mule's foot fern</name>
    <name type="synonym">Polypodium evectum</name>
    <dbReference type="NCBI Taxonomy" id="13825"/>
    <lineage>
        <taxon>Eukaryota</taxon>
        <taxon>Viridiplantae</taxon>
        <taxon>Streptophyta</taxon>
        <taxon>Embryophyta</taxon>
        <taxon>Tracheophyta</taxon>
        <taxon>Polypodiopsida</taxon>
        <taxon>Marattiidae</taxon>
        <taxon>Marattiales</taxon>
        <taxon>Marattiaceae</taxon>
        <taxon>Angiopteris</taxon>
    </lineage>
</organism>
<gene>
    <name evidence="1" type="primary">chlN</name>
</gene>
<evidence type="ECO:0000255" key="1">
    <source>
        <dbReference type="HAMAP-Rule" id="MF_00352"/>
    </source>
</evidence>
<comment type="function">
    <text evidence="1">Component of the dark-operative protochlorophyllide reductase (DPOR) that uses Mg-ATP and reduced ferredoxin to reduce ring D of protochlorophyllide (Pchlide) to form chlorophyllide a (Chlide). This reaction is light-independent. The NB-protein (ChlN-ChlB) is the catalytic component of the complex.</text>
</comment>
<comment type="catalytic activity">
    <reaction evidence="1">
        <text>chlorophyllide a + oxidized 2[4Fe-4S]-[ferredoxin] + 2 ADP + 2 phosphate = protochlorophyllide a + reduced 2[4Fe-4S]-[ferredoxin] + 2 ATP + 2 H2O</text>
        <dbReference type="Rhea" id="RHEA:28202"/>
        <dbReference type="Rhea" id="RHEA-COMP:10002"/>
        <dbReference type="Rhea" id="RHEA-COMP:10004"/>
        <dbReference type="ChEBI" id="CHEBI:15377"/>
        <dbReference type="ChEBI" id="CHEBI:30616"/>
        <dbReference type="ChEBI" id="CHEBI:33722"/>
        <dbReference type="ChEBI" id="CHEBI:33723"/>
        <dbReference type="ChEBI" id="CHEBI:43474"/>
        <dbReference type="ChEBI" id="CHEBI:83348"/>
        <dbReference type="ChEBI" id="CHEBI:83350"/>
        <dbReference type="ChEBI" id="CHEBI:456216"/>
        <dbReference type="EC" id="1.3.7.7"/>
    </reaction>
</comment>
<comment type="cofactor">
    <cofactor evidence="1">
        <name>[4Fe-4S] cluster</name>
        <dbReference type="ChEBI" id="CHEBI:49883"/>
    </cofactor>
    <text evidence="1">Binds 1 [4Fe-4S] cluster per heterodimer. The cluster is bound at the heterodimer interface by residues from both subunits.</text>
</comment>
<comment type="pathway">
    <text evidence="1">Porphyrin-containing compound metabolism; chlorophyll biosynthesis (light-independent).</text>
</comment>
<comment type="subunit">
    <text evidence="1">Protochlorophyllide reductase is composed of three subunits; ChlL, ChlN and ChlB. Forms a heterotetramer of two ChlB and two ChlN subunits.</text>
</comment>
<comment type="subcellular location">
    <subcellularLocation>
        <location>Plastid</location>
        <location>Chloroplast</location>
    </subcellularLocation>
</comment>
<comment type="similarity">
    <text evidence="1">Belongs to the BchN/ChlN family.</text>
</comment>
<keyword id="KW-0004">4Fe-4S</keyword>
<keyword id="KW-0067">ATP-binding</keyword>
<keyword id="KW-0149">Chlorophyll biosynthesis</keyword>
<keyword id="KW-0150">Chloroplast</keyword>
<keyword id="KW-0408">Iron</keyword>
<keyword id="KW-0411">Iron-sulfur</keyword>
<keyword id="KW-0479">Metal-binding</keyword>
<keyword id="KW-0547">Nucleotide-binding</keyword>
<keyword id="KW-0560">Oxidoreductase</keyword>
<keyword id="KW-0602">Photosynthesis</keyword>
<keyword id="KW-0934">Plastid</keyword>
<accession>A2T391</accession>
<geneLocation type="chloroplast"/>